<feature type="chain" id="PRO_1000050320" description="Phosphoribosylformylglycinamidine synthase subunit PurL">
    <location>
        <begin position="1"/>
        <end position="732"/>
    </location>
</feature>
<feature type="active site" evidence="1">
    <location>
        <position position="32"/>
    </location>
</feature>
<feature type="active site" description="Proton acceptor" evidence="1">
    <location>
        <position position="83"/>
    </location>
</feature>
<feature type="binding site" evidence="1">
    <location>
        <position position="35"/>
    </location>
    <ligand>
        <name>ATP</name>
        <dbReference type="ChEBI" id="CHEBI:30616"/>
    </ligand>
</feature>
<feature type="binding site" evidence="1">
    <location>
        <position position="81"/>
    </location>
    <ligand>
        <name>Mg(2+)</name>
        <dbReference type="ChEBI" id="CHEBI:18420"/>
        <label>1</label>
    </ligand>
</feature>
<feature type="binding site" evidence="1">
    <location>
        <begin position="82"/>
        <end position="85"/>
    </location>
    <ligand>
        <name>substrate</name>
    </ligand>
</feature>
<feature type="binding site" evidence="1">
    <location>
        <position position="104"/>
    </location>
    <ligand>
        <name>substrate</name>
    </ligand>
</feature>
<feature type="binding site" evidence="1">
    <location>
        <position position="105"/>
    </location>
    <ligand>
        <name>Mg(2+)</name>
        <dbReference type="ChEBI" id="CHEBI:18420"/>
        <label>2</label>
    </ligand>
</feature>
<feature type="binding site" evidence="1">
    <location>
        <position position="230"/>
    </location>
    <ligand>
        <name>substrate</name>
    </ligand>
</feature>
<feature type="binding site" evidence="1">
    <location>
        <position position="258"/>
    </location>
    <ligand>
        <name>Mg(2+)</name>
        <dbReference type="ChEBI" id="CHEBI:18420"/>
        <label>2</label>
    </ligand>
</feature>
<feature type="binding site" evidence="1">
    <location>
        <begin position="302"/>
        <end position="304"/>
    </location>
    <ligand>
        <name>substrate</name>
    </ligand>
</feature>
<feature type="binding site" evidence="1">
    <location>
        <position position="485"/>
    </location>
    <ligand>
        <name>ATP</name>
        <dbReference type="ChEBI" id="CHEBI:30616"/>
    </ligand>
</feature>
<feature type="binding site" evidence="1">
    <location>
        <position position="522"/>
    </location>
    <ligand>
        <name>ATP</name>
        <dbReference type="ChEBI" id="CHEBI:30616"/>
    </ligand>
</feature>
<feature type="binding site" evidence="1">
    <location>
        <position position="523"/>
    </location>
    <ligand>
        <name>Mg(2+)</name>
        <dbReference type="ChEBI" id="CHEBI:18420"/>
        <label>1</label>
    </ligand>
</feature>
<feature type="binding site" evidence="1">
    <location>
        <position position="525"/>
    </location>
    <ligand>
        <name>substrate</name>
    </ligand>
</feature>
<accession>A6UX13</accession>
<organism>
    <name type="scientific">Methanococcus aeolicus (strain ATCC BAA-1280 / DSM 17508 / OCM 812 / Nankai-3)</name>
    <dbReference type="NCBI Taxonomy" id="419665"/>
    <lineage>
        <taxon>Archaea</taxon>
        <taxon>Methanobacteriati</taxon>
        <taxon>Methanobacteriota</taxon>
        <taxon>Methanomada group</taxon>
        <taxon>Methanococci</taxon>
        <taxon>Methanococcales</taxon>
        <taxon>Methanococcaceae</taxon>
        <taxon>Methanococcus</taxon>
    </lineage>
</organism>
<keyword id="KW-0067">ATP-binding</keyword>
<keyword id="KW-0963">Cytoplasm</keyword>
<keyword id="KW-0436">Ligase</keyword>
<keyword id="KW-0460">Magnesium</keyword>
<keyword id="KW-0479">Metal-binding</keyword>
<keyword id="KW-0547">Nucleotide-binding</keyword>
<keyword id="KW-0658">Purine biosynthesis</keyword>
<gene>
    <name evidence="1" type="primary">purL</name>
    <name type="ordered locus">Maeo_1459</name>
</gene>
<protein>
    <recommendedName>
        <fullName evidence="1">Phosphoribosylformylglycinamidine synthase subunit PurL</fullName>
        <shortName evidence="1">FGAM synthase</shortName>
        <ecNumber evidence="1">6.3.5.3</ecNumber>
    </recommendedName>
    <alternativeName>
        <fullName evidence="1">Formylglycinamide ribonucleotide amidotransferase subunit II</fullName>
        <shortName evidence="1">FGAR amidotransferase II</shortName>
        <shortName evidence="1">FGAR-AT II</shortName>
    </alternativeName>
    <alternativeName>
        <fullName evidence="1">Glutamine amidotransferase PurL</fullName>
    </alternativeName>
    <alternativeName>
        <fullName evidence="1">Phosphoribosylformylglycinamidine synthase subunit II</fullName>
    </alternativeName>
</protein>
<name>PURL_META3</name>
<proteinExistence type="inferred from homology"/>
<comment type="function">
    <text evidence="1">Part of the phosphoribosylformylglycinamidine synthase complex involved in the purines biosynthetic pathway. Catalyzes the ATP-dependent conversion of formylglycinamide ribonucleotide (FGAR) and glutamine to yield formylglycinamidine ribonucleotide (FGAM) and glutamate. The FGAM synthase complex is composed of three subunits. PurQ produces an ammonia molecule by converting glutamine to glutamate. PurL transfers the ammonia molecule to FGAR to form FGAM in an ATP-dependent manner. PurS interacts with PurQ and PurL and is thought to assist in the transfer of the ammonia molecule from PurQ to PurL.</text>
</comment>
<comment type="catalytic activity">
    <reaction evidence="1">
        <text>N(2)-formyl-N(1)-(5-phospho-beta-D-ribosyl)glycinamide + L-glutamine + ATP + H2O = 2-formamido-N(1)-(5-O-phospho-beta-D-ribosyl)acetamidine + L-glutamate + ADP + phosphate + H(+)</text>
        <dbReference type="Rhea" id="RHEA:17129"/>
        <dbReference type="ChEBI" id="CHEBI:15377"/>
        <dbReference type="ChEBI" id="CHEBI:15378"/>
        <dbReference type="ChEBI" id="CHEBI:29985"/>
        <dbReference type="ChEBI" id="CHEBI:30616"/>
        <dbReference type="ChEBI" id="CHEBI:43474"/>
        <dbReference type="ChEBI" id="CHEBI:58359"/>
        <dbReference type="ChEBI" id="CHEBI:147286"/>
        <dbReference type="ChEBI" id="CHEBI:147287"/>
        <dbReference type="ChEBI" id="CHEBI:456216"/>
        <dbReference type="EC" id="6.3.5.3"/>
    </reaction>
</comment>
<comment type="pathway">
    <text evidence="1">Purine metabolism; IMP biosynthesis via de novo pathway; 5-amino-1-(5-phospho-D-ribosyl)imidazole from N(2)-formyl-N(1)-(5-phospho-D-ribosyl)glycinamide: step 1/2.</text>
</comment>
<comment type="subunit">
    <text evidence="1">Monomer. Part of the FGAM synthase complex composed of 1 PurL, 1 PurQ and 2 PurS subunits.</text>
</comment>
<comment type="subcellular location">
    <subcellularLocation>
        <location evidence="1">Cytoplasm</location>
    </subcellularLocation>
</comment>
<comment type="similarity">
    <text evidence="1">Belongs to the FGAMS family.</text>
</comment>
<sequence>MDLNDLKFIEEQLGRKPNDVEIGMFENLWSEHCSYRSTKKLLSMFGKTVKENQNIVVGPGDDAALIKIDDETDLCVAMAMESHNHPSYIDPYNGAATGVGGIVRDIISMNAKPIALLNALRFGDINGEEKDKVRWLVEGVVDGIRDYGNRIGVPNVGGECEFDKSYDYNNLVNVVCIGLVKEGDIVTGKAKETDLTLILVGSTGRDGIGGASFASKDLTSESEGDRPSVQIGDAFTEKCVIDSTLEACATKKVKAIKDLGAAGITSSCSELCYSGGVGAELYLENVILRDEGMTAYEIMVSESQERMLLAVEKGSEEEIIKIFEKYELPVSIIGKTTDTKRFFVKMNDEVVVDLPLDLLCEATLTDSEEKETILETPDNKENIAEPEPAELNNILLKLLKSPNINSKKWIYEQYDHEVQLNTVVRPGKDASVLRLKEAHPKALALVADCNPTYCKLNPYGGSLNLVCESVRNLATVGAKPIGMLDNLNFGNPEKPERFYQIKKCIEGLADGAEIIGVPVVGGNVSLYNETVIDGKDYPINPTPVISIVGTIENINNIPKGAKEGDILIITAPTKDEMGGTEYYKQIHNTEEGIVPKANLEVEKEIYSKVCELVNNGLINEAVDCSKGGLGVAISKLCMTNNIGVELDLGDYNTNGLRNDILLFSESSGRIILSVDKNNADKVVKELNGAIIGTVKGNELKIKLNDNELINLPIEEMKNKYENAFSEMMGENI</sequence>
<reference key="1">
    <citation type="submission" date="2007-06" db="EMBL/GenBank/DDBJ databases">
        <title>Complete sequence of Methanococcus aeolicus Nankai-3.</title>
        <authorList>
            <consortium name="US DOE Joint Genome Institute"/>
            <person name="Copeland A."/>
            <person name="Lucas S."/>
            <person name="Lapidus A."/>
            <person name="Barry K."/>
            <person name="Glavina del Rio T."/>
            <person name="Dalin E."/>
            <person name="Tice H."/>
            <person name="Pitluck S."/>
            <person name="Chain P."/>
            <person name="Malfatti S."/>
            <person name="Shin M."/>
            <person name="Vergez L."/>
            <person name="Schmutz J."/>
            <person name="Larimer F."/>
            <person name="Land M."/>
            <person name="Hauser L."/>
            <person name="Kyrpides N."/>
            <person name="Lykidis A."/>
            <person name="Sieprawska-Lupa M."/>
            <person name="Whitman W.B."/>
            <person name="Richardson P."/>
        </authorList>
    </citation>
    <scope>NUCLEOTIDE SEQUENCE [LARGE SCALE GENOMIC DNA]</scope>
    <source>
        <strain>ATCC BAA-1280 / DSM 17508 / OCM 812 / Nankai-3</strain>
    </source>
</reference>
<evidence type="ECO:0000255" key="1">
    <source>
        <dbReference type="HAMAP-Rule" id="MF_00420"/>
    </source>
</evidence>
<dbReference type="EC" id="6.3.5.3" evidence="1"/>
<dbReference type="EMBL" id="CP000743">
    <property type="protein sequence ID" value="ABR57035.1"/>
    <property type="molecule type" value="Genomic_DNA"/>
</dbReference>
<dbReference type="RefSeq" id="WP_011974167.1">
    <property type="nucleotide sequence ID" value="NC_009635.1"/>
</dbReference>
<dbReference type="SMR" id="A6UX13"/>
<dbReference type="STRING" id="419665.Maeo_1459"/>
<dbReference type="GeneID" id="5326931"/>
<dbReference type="KEGG" id="mae:Maeo_1459"/>
<dbReference type="eggNOG" id="arCOG00641">
    <property type="taxonomic scope" value="Archaea"/>
</dbReference>
<dbReference type="HOGENOM" id="CLU_003100_0_1_2"/>
<dbReference type="OrthoDB" id="8251at2157"/>
<dbReference type="UniPathway" id="UPA00074">
    <property type="reaction ID" value="UER00128"/>
</dbReference>
<dbReference type="Proteomes" id="UP000001106">
    <property type="component" value="Chromosome"/>
</dbReference>
<dbReference type="GO" id="GO:0005737">
    <property type="term" value="C:cytoplasm"/>
    <property type="evidence" value="ECO:0007669"/>
    <property type="project" value="UniProtKB-SubCell"/>
</dbReference>
<dbReference type="GO" id="GO:0005524">
    <property type="term" value="F:ATP binding"/>
    <property type="evidence" value="ECO:0007669"/>
    <property type="project" value="UniProtKB-UniRule"/>
</dbReference>
<dbReference type="GO" id="GO:0000287">
    <property type="term" value="F:magnesium ion binding"/>
    <property type="evidence" value="ECO:0007669"/>
    <property type="project" value="UniProtKB-UniRule"/>
</dbReference>
<dbReference type="GO" id="GO:0004642">
    <property type="term" value="F:phosphoribosylformylglycinamidine synthase activity"/>
    <property type="evidence" value="ECO:0007669"/>
    <property type="project" value="UniProtKB-UniRule"/>
</dbReference>
<dbReference type="GO" id="GO:0006189">
    <property type="term" value="P:'de novo' IMP biosynthetic process"/>
    <property type="evidence" value="ECO:0007669"/>
    <property type="project" value="UniProtKB-UniRule"/>
</dbReference>
<dbReference type="CDD" id="cd02203">
    <property type="entry name" value="PurL_repeat1"/>
    <property type="match status" value="1"/>
</dbReference>
<dbReference type="CDD" id="cd02204">
    <property type="entry name" value="PurL_repeat2"/>
    <property type="match status" value="1"/>
</dbReference>
<dbReference type="Gene3D" id="3.90.650.10">
    <property type="entry name" value="PurM-like C-terminal domain"/>
    <property type="match status" value="2"/>
</dbReference>
<dbReference type="Gene3D" id="3.30.1330.10">
    <property type="entry name" value="PurM-like, N-terminal domain"/>
    <property type="match status" value="2"/>
</dbReference>
<dbReference type="HAMAP" id="MF_00420">
    <property type="entry name" value="PurL_2"/>
    <property type="match status" value="1"/>
</dbReference>
<dbReference type="InterPro" id="IPR010074">
    <property type="entry name" value="PRibForGlyAmidine_synth_PurL"/>
</dbReference>
<dbReference type="InterPro" id="IPR041609">
    <property type="entry name" value="PurL_linker"/>
</dbReference>
<dbReference type="InterPro" id="IPR010918">
    <property type="entry name" value="PurM-like_C_dom"/>
</dbReference>
<dbReference type="InterPro" id="IPR036676">
    <property type="entry name" value="PurM-like_C_sf"/>
</dbReference>
<dbReference type="InterPro" id="IPR016188">
    <property type="entry name" value="PurM-like_N"/>
</dbReference>
<dbReference type="InterPro" id="IPR036921">
    <property type="entry name" value="PurM-like_N_sf"/>
</dbReference>
<dbReference type="NCBIfam" id="TIGR01736">
    <property type="entry name" value="FGAM_synth_II"/>
    <property type="match status" value="1"/>
</dbReference>
<dbReference type="NCBIfam" id="NF002290">
    <property type="entry name" value="PRK01213.1"/>
    <property type="match status" value="1"/>
</dbReference>
<dbReference type="PANTHER" id="PTHR43555">
    <property type="entry name" value="PHOSPHORIBOSYLFORMYLGLYCINAMIDINE SYNTHASE SUBUNIT PURL"/>
    <property type="match status" value="1"/>
</dbReference>
<dbReference type="PANTHER" id="PTHR43555:SF1">
    <property type="entry name" value="PHOSPHORIBOSYLFORMYLGLYCINAMIDINE SYNTHASE SUBUNIT PURL"/>
    <property type="match status" value="1"/>
</dbReference>
<dbReference type="Pfam" id="PF00586">
    <property type="entry name" value="AIRS"/>
    <property type="match status" value="2"/>
</dbReference>
<dbReference type="Pfam" id="PF02769">
    <property type="entry name" value="AIRS_C"/>
    <property type="match status" value="2"/>
</dbReference>
<dbReference type="Pfam" id="PF18072">
    <property type="entry name" value="FGAR-AT_linker"/>
    <property type="match status" value="1"/>
</dbReference>
<dbReference type="PIRSF" id="PIRSF001587">
    <property type="entry name" value="FGAM_synthase_II"/>
    <property type="match status" value="1"/>
</dbReference>
<dbReference type="SUPFAM" id="SSF56042">
    <property type="entry name" value="PurM C-terminal domain-like"/>
    <property type="match status" value="2"/>
</dbReference>
<dbReference type="SUPFAM" id="SSF55326">
    <property type="entry name" value="PurM N-terminal domain-like"/>
    <property type="match status" value="2"/>
</dbReference>